<organism>
    <name type="scientific">Streptomyces clavuligerus</name>
    <dbReference type="NCBI Taxonomy" id="1901"/>
    <lineage>
        <taxon>Bacteria</taxon>
        <taxon>Bacillati</taxon>
        <taxon>Actinomycetota</taxon>
        <taxon>Actinomycetes</taxon>
        <taxon>Kitasatosporales</taxon>
        <taxon>Streptomycetaceae</taxon>
        <taxon>Streptomyces</taxon>
    </lineage>
</organism>
<reference key="1">
    <citation type="submission" date="2008-02" db="EMBL/GenBank/DDBJ databases">
        <title>Annotation of Streptomyces clavuligerus ATCC 27064.</title>
        <authorList>
            <person name="Fischbach M."/>
            <person name="Ward D."/>
            <person name="Young S."/>
            <person name="Jaffe D."/>
            <person name="Gnerre S."/>
            <person name="Berlin A."/>
            <person name="Heiman D."/>
            <person name="Hepburn T."/>
            <person name="Sykes S."/>
            <person name="Alvarado L."/>
            <person name="Kodira C.D."/>
            <person name="Straight P."/>
            <person name="Clardy J."/>
            <person name="Hung D."/>
            <person name="Kolter R."/>
            <person name="Mekalanos J."/>
            <person name="Walker S."/>
            <person name="Walsh C.T."/>
            <person name="Lander E."/>
            <person name="Galagan J."/>
            <person name="Nusbaum C."/>
            <person name="Birren B."/>
        </authorList>
    </citation>
    <scope>NUCLEOTIDE SEQUENCE [LARGE SCALE GENOMIC DNA]</scope>
    <source>
        <strain>ATCC 27064 / DSM 738 / JCM 4710 / NBRC 13307 / NCIMB 12785 / NRRL 3585 / VKM Ac-602</strain>
    </source>
</reference>
<reference key="2">
    <citation type="journal article" date="2010" name="Genome Biol. Evol.">
        <title>The sequence of a 1.8-mb bacterial linear plasmid reveals a rich evolutionary reservoir of secondary metabolic pathways.</title>
        <authorList>
            <person name="Medema M.H."/>
            <person name="Trefzer A."/>
            <person name="Kovalchuk A."/>
            <person name="van den Berg M."/>
            <person name="Mueller U."/>
            <person name="Heijne W."/>
            <person name="Wu L."/>
            <person name="Alam M.T."/>
            <person name="Ronning C.M."/>
            <person name="Nierman W.C."/>
            <person name="Bovenberg R.A.L."/>
            <person name="Breitling R."/>
            <person name="Takano E."/>
        </authorList>
    </citation>
    <scope>NUCLEOTIDE SEQUENCE [LARGE SCALE GENOMIC DNA]</scope>
    <source>
        <strain evidence="10">ATCC 27064 / DSM 738 / JCM 4710 / NBRC 13307 / NCIMB 12785 / NRRL 3585 / VKM Ac-602</strain>
        <plasmid evidence="9">pSCL4</plasmid>
    </source>
</reference>
<reference key="3">
    <citation type="journal article" date="2011" name="ChemBioChem">
        <title>Identification of the first bacterial monoterpene cyclase, a 1,8-cineole synthase, that catalyzes the direct conversion of geranyl diphosphate.</title>
        <authorList>
            <person name="Nakano C."/>
            <person name="Kim H.K."/>
            <person name="Ohnishi Y."/>
        </authorList>
    </citation>
    <scope>FUNCTION</scope>
    <scope>CATALYTIC ACTIVITY</scope>
    <scope>BIOPHYSICOCHEMICAL PROPERTIES</scope>
    <source>
        <strain>ATCC 27064 / DSM 738 / JCM 4710 / NBRC 13307 / NCIMB 12785 / NRRL 3585 / VKM Ac-602</strain>
    </source>
</reference>
<reference key="4">
    <citation type="journal article" date="2016" name="Beilstein J. Org. Chem.">
        <title>A detailed view on 1,8-cineol biosynthesis by Streptomyces clavuligerus.</title>
        <authorList>
            <person name="Rinkel J."/>
            <person name="Rabe P."/>
            <person name="Zur Horst L."/>
            <person name="Dickschat J.S."/>
        </authorList>
    </citation>
    <scope>FUNCTION</scope>
    <scope>CATALYTIC ACTIVITY</scope>
    <scope>REACTION MECHANISM</scope>
    <source>
        <strain>ATCC 27064 / DSM 738 / JCM 4710 / NBRC 13307 / NCIMB 12785 / NRRL 3585 / VKM Ac-602</strain>
    </source>
</reference>
<reference key="5">
    <citation type="journal article" date="2017" name="ACS Catal.">
        <title>Structural basis of catalysis in the bacterial monoterpene synthases linalool synthase and 1,8-cineole synthase.</title>
        <authorList>
            <person name="Karuppiah V."/>
            <person name="Ranaghan K.E."/>
            <person name="Leferink N.G.H."/>
            <person name="Johannissen L.O."/>
            <person name="Shanmugam M."/>
            <person name="Cheallaigh A.N."/>
            <person name="Bennett N.J."/>
            <person name="Kearset L.J."/>
            <person name="Takano E."/>
            <person name="Gardiner J.M."/>
            <person name="van der Kamp M.W."/>
            <person name="Hay S."/>
            <person name="Mulholland A.J."/>
            <person name="Leys D."/>
            <person name="Scrutton N.S."/>
        </authorList>
    </citation>
    <scope>X-RAY CRYSTALLOGRAPHY (1.51 ANGSTROMS) IN COMPLEX WITH SUBSTRATE ANALOG AND MAGMESIUM IONS</scope>
    <scope>FUNCTION</scope>
    <scope>CATALYTIC ACTIVITY</scope>
    <scope>COFACTOR</scope>
    <scope>SUBSTRATE SPECIFICITY</scope>
    <scope>REACTION MECHANISM</scope>
    <scope>DOMAIN</scope>
    <scope>SUBUNIT</scope>
    <source>
        <strain>ATCC 27064 / DSM 738 / JCM 4710 / NBRC 13307 / NCIMB 12785 / NRRL 3585 / VKM Ac-602</strain>
    </source>
</reference>
<gene>
    <name evidence="4" type="primary">cnsA</name>
    <name evidence="9" type="ORF">SCLAV_p0982</name>
    <name evidence="8" type="ORF">SSCG_00536</name>
</gene>
<sequence length="330" mass="37725">MPAGHEEFDIPFPSRVNPFHARAEDRHVAWMRAMGLITGDAAEATYRRWSPAKVGARWFYLAQGEDLDLGCDIFGWFFAYDDHFDGPTGTDPRQTAAFVNRTVAMLDPRADPTGEHPLNIAFHDLWQRESAPMSPLWQRRAVDHWTQYLTAHITEATNRTRHTSPTIADYLELRHRTGFMPPLLDLIERVWRAEIPAPVYTTPEVQTLLHTTNQNINIVNDVLSLEKEEAHGDPHNLVLVIQHERQSTRQQALATARRMIDEWTDTFIRTEPRLPALCGRLGIPLADRTSLYTAVEGMRAAIRGNYDWCAETNRYAVHRPTGTGRATTPW</sequence>
<evidence type="ECO:0000269" key="1">
    <source>
    </source>
</evidence>
<evidence type="ECO:0000269" key="2">
    <source>
    </source>
</evidence>
<evidence type="ECO:0000269" key="3">
    <source>
    </source>
</evidence>
<evidence type="ECO:0000303" key="4">
    <source>
    </source>
</evidence>
<evidence type="ECO:0000303" key="5">
    <source>
    </source>
</evidence>
<evidence type="ECO:0000305" key="6"/>
<evidence type="ECO:0000305" key="7">
    <source>
    </source>
</evidence>
<evidence type="ECO:0000312" key="8">
    <source>
        <dbReference type="EMBL" id="EDY47508.1"/>
    </source>
</evidence>
<evidence type="ECO:0000312" key="9">
    <source>
        <dbReference type="EMBL" id="EFG04469.2"/>
    </source>
</evidence>
<evidence type="ECO:0000312" key="10">
    <source>
        <dbReference type="Proteomes" id="UP000002357"/>
    </source>
</evidence>
<evidence type="ECO:0007744" key="11">
    <source>
        <dbReference type="PDB" id="5NX6"/>
    </source>
</evidence>
<evidence type="ECO:0007744" key="12">
    <source>
        <dbReference type="PDB" id="5NX7"/>
    </source>
</evidence>
<evidence type="ECO:0007829" key="13">
    <source>
        <dbReference type="PDB" id="5NX7"/>
    </source>
</evidence>
<name>CNSA_STRCL</name>
<accession>B5GMG2</accession>
<keyword id="KW-0002">3D-structure</keyword>
<keyword id="KW-0456">Lyase</keyword>
<keyword id="KW-0460">Magnesium</keyword>
<keyword id="KW-0479">Metal-binding</keyword>
<keyword id="KW-0614">Plasmid</keyword>
<keyword id="KW-1185">Reference proteome</keyword>
<comment type="function">
    <text evidence="1 2 3">In vitro, catalyzes the formation of 1,8-cineole from geranyl diphosphate (GPP) (PubMed:21726035, PubMed:28144299, PubMed:28966840). Can also accept neryl diphosphate (NPP) as substrate to produce 1,8-cineole (PubMed:28966840).</text>
</comment>
<comment type="catalytic activity">
    <reaction evidence="1 2 3">
        <text>(2E)-geranyl diphosphate + H2O = 1,8-cineole + diphosphate</text>
        <dbReference type="Rhea" id="RHEA:32543"/>
        <dbReference type="ChEBI" id="CHEBI:15377"/>
        <dbReference type="ChEBI" id="CHEBI:27961"/>
        <dbReference type="ChEBI" id="CHEBI:33019"/>
        <dbReference type="ChEBI" id="CHEBI:58057"/>
        <dbReference type="EC" id="4.2.3.108"/>
    </reaction>
</comment>
<comment type="catalytic activity">
    <reaction evidence="3">
        <text>neryl diphosphate + H2O = 1,8-cineole + diphosphate</text>
        <dbReference type="Rhea" id="RHEA:56632"/>
        <dbReference type="ChEBI" id="CHEBI:15377"/>
        <dbReference type="ChEBI" id="CHEBI:27961"/>
        <dbReference type="ChEBI" id="CHEBI:33019"/>
        <dbReference type="ChEBI" id="CHEBI:57665"/>
    </reaction>
</comment>
<comment type="cofactor">
    <cofactor evidence="3">
        <name>Mg(2+)</name>
        <dbReference type="ChEBI" id="CHEBI:18420"/>
    </cofactor>
    <text evidence="3">Binds 3 Mg(2+) ions per subunit.</text>
</comment>
<comment type="biophysicochemical properties">
    <kinetics>
        <KM evidence="1">170 nM for geranyl diphosphate (GPP)</KM>
        <text evidence="1">kcat is 0.079 sec(-1) with geranyl diphosphate (GPP) as substrate.</text>
    </kinetics>
</comment>
<comment type="subunit">
    <text evidence="3">Homodimer.</text>
</comment>
<comment type="domain">
    <text evidence="7">The Asp-Asp-Xaa-Xaa-Asp (DDXXD) and Asn-Xaa-Xaa-Xaa-Ser-Xaa-Xaa-Xaa-Glu (NSE) motifs are important for the catalytic activity, presumably through binding to Mg(2+).</text>
</comment>
<comment type="similarity">
    <text evidence="6">Belongs to the terpene synthase family.</text>
</comment>
<dbReference type="EC" id="4.2.3.108" evidence="1 2 3"/>
<dbReference type="EMBL" id="DS570626">
    <property type="protein sequence ID" value="EDY47508.1"/>
    <property type="molecule type" value="Genomic_DNA"/>
</dbReference>
<dbReference type="EMBL" id="CM000914">
    <property type="protein sequence ID" value="EFG04469.2"/>
    <property type="molecule type" value="Genomic_DNA"/>
</dbReference>
<dbReference type="RefSeq" id="WP_003952918.1">
    <property type="nucleotide sequence ID" value="NZ_CM000914.1"/>
</dbReference>
<dbReference type="PDB" id="5NX6">
    <property type="method" value="X-ray"/>
    <property type="resolution" value="1.63 A"/>
    <property type="chains" value="A/B=1-330"/>
</dbReference>
<dbReference type="PDB" id="5NX7">
    <property type="method" value="X-ray"/>
    <property type="resolution" value="1.51 A"/>
    <property type="chains" value="A/B=1-330"/>
</dbReference>
<dbReference type="PDBsum" id="5NX6"/>
<dbReference type="PDBsum" id="5NX7"/>
<dbReference type="SMR" id="B5GMG2"/>
<dbReference type="GeneID" id="93734075"/>
<dbReference type="KEGG" id="sclf:BB341_29050"/>
<dbReference type="eggNOG" id="COG0664">
    <property type="taxonomic scope" value="Bacteria"/>
</dbReference>
<dbReference type="OrthoDB" id="3676909at2"/>
<dbReference type="BioCyc" id="MetaCyc:MONOMER-17530"/>
<dbReference type="BRENDA" id="4.2.3.108">
    <property type="organism ID" value="5988"/>
</dbReference>
<dbReference type="Proteomes" id="UP000002357">
    <property type="component" value="Plasmid pSCL4"/>
</dbReference>
<dbReference type="GO" id="GO:0102313">
    <property type="term" value="F:1,8-cineole synthase activity"/>
    <property type="evidence" value="ECO:0000314"/>
    <property type="project" value="UniProtKB"/>
</dbReference>
<dbReference type="GO" id="GO:0000287">
    <property type="term" value="F:magnesium ion binding"/>
    <property type="evidence" value="ECO:0000314"/>
    <property type="project" value="UniProtKB"/>
</dbReference>
<dbReference type="GO" id="GO:0010333">
    <property type="term" value="F:terpene synthase activity"/>
    <property type="evidence" value="ECO:0007669"/>
    <property type="project" value="InterPro"/>
</dbReference>
<dbReference type="GO" id="GO:0033383">
    <property type="term" value="P:geranyl diphosphate metabolic process"/>
    <property type="evidence" value="ECO:0000314"/>
    <property type="project" value="UniProtKB"/>
</dbReference>
<dbReference type="FunFam" id="1.10.600.10:FF:000044">
    <property type="entry name" value="(2Z,6E)-hedycaryol synthase"/>
    <property type="match status" value="1"/>
</dbReference>
<dbReference type="Gene3D" id="1.10.600.10">
    <property type="entry name" value="Farnesyl Diphosphate Synthase"/>
    <property type="match status" value="1"/>
</dbReference>
<dbReference type="InterPro" id="IPR008949">
    <property type="entry name" value="Isoprenoid_synthase_dom_sf"/>
</dbReference>
<dbReference type="InterPro" id="IPR034686">
    <property type="entry name" value="Terpene_cyclase-like_2"/>
</dbReference>
<dbReference type="PANTHER" id="PTHR35201:SF4">
    <property type="entry name" value="BETA-PINACENE SYNTHASE-RELATED"/>
    <property type="match status" value="1"/>
</dbReference>
<dbReference type="PANTHER" id="PTHR35201">
    <property type="entry name" value="TERPENE SYNTHASE"/>
    <property type="match status" value="1"/>
</dbReference>
<dbReference type="Pfam" id="PF19086">
    <property type="entry name" value="Terpene_syn_C_2"/>
    <property type="match status" value="1"/>
</dbReference>
<dbReference type="SFLD" id="SFLDS00005">
    <property type="entry name" value="Isoprenoid_Synthase_Type_I"/>
    <property type="match status" value="1"/>
</dbReference>
<dbReference type="SFLD" id="SFLDG01020">
    <property type="entry name" value="Terpene_Cyclase_Like_2"/>
    <property type="match status" value="1"/>
</dbReference>
<dbReference type="SUPFAM" id="SSF48576">
    <property type="entry name" value="Terpenoid synthases"/>
    <property type="match status" value="1"/>
</dbReference>
<feature type="chain" id="PRO_0000445228" description="1,8-cineole synthase">
    <location>
        <begin position="1"/>
        <end position="330"/>
    </location>
</feature>
<feature type="short sequence motif" description="DDXXD motif" evidence="7">
    <location>
        <begin position="81"/>
        <end position="85"/>
    </location>
</feature>
<feature type="short sequence motif" description="NXXXSXXXE motif" evidence="7">
    <location>
        <begin position="220"/>
        <end position="228"/>
    </location>
</feature>
<feature type="binding site" evidence="3 11 12">
    <location>
        <position position="81"/>
    </location>
    <ligand>
        <name>Mg(2+)</name>
        <dbReference type="ChEBI" id="CHEBI:18420"/>
        <label>1</label>
    </ligand>
</feature>
<feature type="binding site" evidence="3 11 12">
    <location>
        <position position="81"/>
    </location>
    <ligand>
        <name>Mg(2+)</name>
        <dbReference type="ChEBI" id="CHEBI:18420"/>
        <label>2</label>
    </ligand>
</feature>
<feature type="binding site" evidence="3 12">
    <location>
        <position position="174"/>
    </location>
    <ligand>
        <name>substrate</name>
    </ligand>
</feature>
<feature type="binding site" evidence="3 11 12">
    <location>
        <position position="220"/>
    </location>
    <ligand>
        <name>Mg(2+)</name>
        <dbReference type="ChEBI" id="CHEBI:18420"/>
        <label>3</label>
    </ligand>
</feature>
<feature type="binding site" evidence="3 11 12">
    <location>
        <position position="224"/>
    </location>
    <ligand>
        <name>Mg(2+)</name>
        <dbReference type="ChEBI" id="CHEBI:18420"/>
        <label>3</label>
    </ligand>
</feature>
<feature type="binding site" evidence="3 11 12">
    <location>
        <position position="227"/>
    </location>
    <ligand>
        <name>substrate</name>
    </ligand>
</feature>
<feature type="binding site" evidence="3 11 12">
    <location>
        <position position="228"/>
    </location>
    <ligand>
        <name>Mg(2+)</name>
        <dbReference type="ChEBI" id="CHEBI:18420"/>
        <label>3</label>
    </ligand>
</feature>
<feature type="binding site" evidence="3 11 12">
    <location>
        <begin position="314"/>
        <end position="315"/>
    </location>
    <ligand>
        <name>substrate</name>
    </ligand>
</feature>
<feature type="helix" evidence="13">
    <location>
        <begin position="20"/>
        <end position="33"/>
    </location>
</feature>
<feature type="helix" evidence="13">
    <location>
        <begin position="40"/>
        <end position="48"/>
    </location>
</feature>
<feature type="helix" evidence="13">
    <location>
        <begin position="53"/>
        <end position="58"/>
    </location>
</feature>
<feature type="turn" evidence="13">
    <location>
        <begin position="59"/>
        <end position="61"/>
    </location>
</feature>
<feature type="helix" evidence="13">
    <location>
        <begin position="64"/>
        <end position="83"/>
    </location>
</feature>
<feature type="helix" evidence="13">
    <location>
        <begin position="96"/>
        <end position="104"/>
    </location>
</feature>
<feature type="helix" evidence="13">
    <location>
        <begin position="117"/>
        <end position="130"/>
    </location>
</feature>
<feature type="helix" evidence="13">
    <location>
        <begin position="135"/>
        <end position="150"/>
    </location>
</feature>
<feature type="helix" evidence="13">
    <location>
        <begin position="152"/>
        <end position="160"/>
    </location>
</feature>
<feature type="helix" evidence="13">
    <location>
        <begin position="167"/>
        <end position="177"/>
    </location>
</feature>
<feature type="helix" evidence="13">
    <location>
        <begin position="180"/>
        <end position="190"/>
    </location>
</feature>
<feature type="helix" evidence="13">
    <location>
        <begin position="197"/>
        <end position="200"/>
    </location>
</feature>
<feature type="helix" evidence="13">
    <location>
        <begin position="203"/>
        <end position="223"/>
    </location>
</feature>
<feature type="helix" evidence="13">
    <location>
        <begin position="225"/>
        <end position="231"/>
    </location>
</feature>
<feature type="helix" evidence="13">
    <location>
        <begin position="237"/>
        <end position="245"/>
    </location>
</feature>
<feature type="helix" evidence="13">
    <location>
        <begin position="249"/>
        <end position="270"/>
    </location>
</feature>
<feature type="helix" evidence="13">
    <location>
        <begin position="271"/>
        <end position="273"/>
    </location>
</feature>
<feature type="helix" evidence="13">
    <location>
        <begin position="274"/>
        <end position="281"/>
    </location>
</feature>
<feature type="helix" evidence="13">
    <location>
        <begin position="285"/>
        <end position="311"/>
    </location>
</feature>
<proteinExistence type="evidence at protein level"/>
<protein>
    <recommendedName>
        <fullName evidence="4">1,8-cineole synthase</fullName>
        <shortName evidence="4">CnsA</shortName>
        <shortName evidence="5">bCinS</shortName>
        <ecNumber evidence="1 2 3">4.2.3.108</ecNumber>
    </recommendedName>
    <alternativeName>
        <fullName evidence="5">Monoterpene synthase</fullName>
    </alternativeName>
</protein>
<geneLocation type="plasmid" evidence="9 10">
    <name>pSCL4</name>
</geneLocation>